<proteinExistence type="evidence at transcript level"/>
<gene>
    <name type="primary">meu31</name>
    <name type="ORF">SPAC1A6.06c</name>
</gene>
<dbReference type="EMBL" id="CU329670">
    <property type="protein sequence ID" value="CAB16356.2"/>
    <property type="molecule type" value="Genomic_DNA"/>
</dbReference>
<dbReference type="EMBL" id="AB054315">
    <property type="protein sequence ID" value="BAB60881.1"/>
    <property type="molecule type" value="mRNA"/>
</dbReference>
<dbReference type="PIR" id="T38009">
    <property type="entry name" value="T38009"/>
</dbReference>
<dbReference type="RefSeq" id="NP_593198.1">
    <property type="nucleotide sequence ID" value="NM_001018594.2"/>
</dbReference>
<dbReference type="BioGRID" id="278748">
    <property type="interactions" value="7"/>
</dbReference>
<dbReference type="STRING" id="284812.Q9Y826"/>
<dbReference type="PaxDb" id="4896-SPAC1A6.06c.1"/>
<dbReference type="EnsemblFungi" id="SPAC1A6.06c.1">
    <property type="protein sequence ID" value="SPAC1A6.06c.1:pep"/>
    <property type="gene ID" value="SPAC1A6.06c"/>
</dbReference>
<dbReference type="GeneID" id="2542280"/>
<dbReference type="KEGG" id="spo:2542280"/>
<dbReference type="PomBase" id="SPAC1A6.06c">
    <property type="gene designation" value="meu31"/>
</dbReference>
<dbReference type="VEuPathDB" id="FungiDB:SPAC1A6.06c"/>
<dbReference type="HOGENOM" id="CLU_1497076_0_0_1"/>
<dbReference type="InParanoid" id="Q9Y826"/>
<dbReference type="OMA" id="DAFFSMC"/>
<dbReference type="PRO" id="PR:Q9Y826"/>
<dbReference type="Proteomes" id="UP000002485">
    <property type="component" value="Chromosome I"/>
</dbReference>
<dbReference type="GO" id="GO:0005737">
    <property type="term" value="C:cytoplasm"/>
    <property type="evidence" value="ECO:0007005"/>
    <property type="project" value="PomBase"/>
</dbReference>
<dbReference type="GO" id="GO:0005794">
    <property type="term" value="C:Golgi apparatus"/>
    <property type="evidence" value="ECO:0007005"/>
    <property type="project" value="PomBase"/>
</dbReference>
<dbReference type="GO" id="GO:0051321">
    <property type="term" value="P:meiotic cell cycle"/>
    <property type="evidence" value="ECO:0007669"/>
    <property type="project" value="UniProtKB-KW"/>
</dbReference>
<protein>
    <recommendedName>
        <fullName>Meiotic expression up-regulated protein 31</fullName>
    </recommendedName>
</protein>
<sequence>MSCISEIGKFVKSIEYIKLPCLFIFAAIVGMNLSLLYCLLKGWKNVMIWGIETMLFGAIGIFFAWKKKLSWEHLVLLWSTIDAFFSMCLRSCTIIYFSMNPYMLCEILNARNVISCSLNTQKFFFIIVAASNVYSIFQLCGCLLMFNNIISIRPSERTEPEFNFDLEKGVAFASDSEFPEKSICI</sequence>
<keyword id="KW-0469">Meiosis</keyword>
<keyword id="KW-1185">Reference proteome</keyword>
<organism>
    <name type="scientific">Schizosaccharomyces pombe (strain 972 / ATCC 24843)</name>
    <name type="common">Fission yeast</name>
    <dbReference type="NCBI Taxonomy" id="284812"/>
    <lineage>
        <taxon>Eukaryota</taxon>
        <taxon>Fungi</taxon>
        <taxon>Dikarya</taxon>
        <taxon>Ascomycota</taxon>
        <taxon>Taphrinomycotina</taxon>
        <taxon>Schizosaccharomycetes</taxon>
        <taxon>Schizosaccharomycetales</taxon>
        <taxon>Schizosaccharomycetaceae</taxon>
        <taxon>Schizosaccharomyces</taxon>
    </lineage>
</organism>
<reference key="1">
    <citation type="journal article" date="2002" name="Nature">
        <title>The genome sequence of Schizosaccharomyces pombe.</title>
        <authorList>
            <person name="Wood V."/>
            <person name="Gwilliam R."/>
            <person name="Rajandream M.A."/>
            <person name="Lyne M.H."/>
            <person name="Lyne R."/>
            <person name="Stewart A."/>
            <person name="Sgouros J.G."/>
            <person name="Peat N."/>
            <person name="Hayles J."/>
            <person name="Baker S.G."/>
            <person name="Basham D."/>
            <person name="Bowman S."/>
            <person name="Brooks K."/>
            <person name="Brown D."/>
            <person name="Brown S."/>
            <person name="Chillingworth T."/>
            <person name="Churcher C.M."/>
            <person name="Collins M."/>
            <person name="Connor R."/>
            <person name="Cronin A."/>
            <person name="Davis P."/>
            <person name="Feltwell T."/>
            <person name="Fraser A."/>
            <person name="Gentles S."/>
            <person name="Goble A."/>
            <person name="Hamlin N."/>
            <person name="Harris D.E."/>
            <person name="Hidalgo J."/>
            <person name="Hodgson G."/>
            <person name="Holroyd S."/>
            <person name="Hornsby T."/>
            <person name="Howarth S."/>
            <person name="Huckle E.J."/>
            <person name="Hunt S."/>
            <person name="Jagels K."/>
            <person name="James K.D."/>
            <person name="Jones L."/>
            <person name="Jones M."/>
            <person name="Leather S."/>
            <person name="McDonald S."/>
            <person name="McLean J."/>
            <person name="Mooney P."/>
            <person name="Moule S."/>
            <person name="Mungall K.L."/>
            <person name="Murphy L.D."/>
            <person name="Niblett D."/>
            <person name="Odell C."/>
            <person name="Oliver K."/>
            <person name="O'Neil S."/>
            <person name="Pearson D."/>
            <person name="Quail M.A."/>
            <person name="Rabbinowitsch E."/>
            <person name="Rutherford K.M."/>
            <person name="Rutter S."/>
            <person name="Saunders D."/>
            <person name="Seeger K."/>
            <person name="Sharp S."/>
            <person name="Skelton J."/>
            <person name="Simmonds M.N."/>
            <person name="Squares R."/>
            <person name="Squares S."/>
            <person name="Stevens K."/>
            <person name="Taylor K."/>
            <person name="Taylor R.G."/>
            <person name="Tivey A."/>
            <person name="Walsh S.V."/>
            <person name="Warren T."/>
            <person name="Whitehead S."/>
            <person name="Woodward J.R."/>
            <person name="Volckaert G."/>
            <person name="Aert R."/>
            <person name="Robben J."/>
            <person name="Grymonprez B."/>
            <person name="Weltjens I."/>
            <person name="Vanstreels E."/>
            <person name="Rieger M."/>
            <person name="Schaefer M."/>
            <person name="Mueller-Auer S."/>
            <person name="Gabel C."/>
            <person name="Fuchs M."/>
            <person name="Duesterhoeft A."/>
            <person name="Fritzc C."/>
            <person name="Holzer E."/>
            <person name="Moestl D."/>
            <person name="Hilbert H."/>
            <person name="Borzym K."/>
            <person name="Langer I."/>
            <person name="Beck A."/>
            <person name="Lehrach H."/>
            <person name="Reinhardt R."/>
            <person name="Pohl T.M."/>
            <person name="Eger P."/>
            <person name="Zimmermann W."/>
            <person name="Wedler H."/>
            <person name="Wambutt R."/>
            <person name="Purnelle B."/>
            <person name="Goffeau A."/>
            <person name="Cadieu E."/>
            <person name="Dreano S."/>
            <person name="Gloux S."/>
            <person name="Lelaure V."/>
            <person name="Mottier S."/>
            <person name="Galibert F."/>
            <person name="Aves S.J."/>
            <person name="Xiang Z."/>
            <person name="Hunt C."/>
            <person name="Moore K."/>
            <person name="Hurst S.M."/>
            <person name="Lucas M."/>
            <person name="Rochet M."/>
            <person name="Gaillardin C."/>
            <person name="Tallada V.A."/>
            <person name="Garzon A."/>
            <person name="Thode G."/>
            <person name="Daga R.R."/>
            <person name="Cruzado L."/>
            <person name="Jimenez J."/>
            <person name="Sanchez M."/>
            <person name="del Rey F."/>
            <person name="Benito J."/>
            <person name="Dominguez A."/>
            <person name="Revuelta J.L."/>
            <person name="Moreno S."/>
            <person name="Armstrong J."/>
            <person name="Forsburg S.L."/>
            <person name="Cerutti L."/>
            <person name="Lowe T."/>
            <person name="McCombie W.R."/>
            <person name="Paulsen I."/>
            <person name="Potashkin J."/>
            <person name="Shpakovski G.V."/>
            <person name="Ussery D."/>
            <person name="Barrell B.G."/>
            <person name="Nurse P."/>
        </authorList>
    </citation>
    <scope>NUCLEOTIDE SEQUENCE [LARGE SCALE GENOMIC DNA]</scope>
    <source>
        <strain>972 / ATCC 24843</strain>
    </source>
</reference>
<reference key="2">
    <citation type="journal article" date="2001" name="Nucleic Acids Res.">
        <title>Comprehensive isolation of meiosis-specific genes identifies novel proteins and unusual non-coding transcripts in Schizosaccharomyces pombe.</title>
        <authorList>
            <person name="Watanabe T."/>
            <person name="Miyashita K."/>
            <person name="Saito T.T."/>
            <person name="Yoneki T."/>
            <person name="Kakihara Y."/>
            <person name="Nabeshima K."/>
            <person name="Kishi Y.A."/>
            <person name="Shimoda C."/>
            <person name="Nojima H."/>
        </authorList>
    </citation>
    <scope>NUCLEOTIDE SEQUENCE [MRNA] OF 14-185</scope>
    <source>
        <strain>CD16-1</strain>
    </source>
</reference>
<accession>Q9Y826</accession>
<accession>Q96WR5</accession>
<feature type="chain" id="PRO_0000096454" description="Meiotic expression up-regulated protein 31">
    <location>
        <begin position="1"/>
        <end position="185"/>
    </location>
</feature>
<name>MEU31_SCHPO</name>